<feature type="chain" id="PRO_1000184813" description="ATP synthase subunit delta">
    <location>
        <begin position="1"/>
        <end position="177"/>
    </location>
</feature>
<organism>
    <name type="scientific">Streptococcus suis (strain 98HAH33)</name>
    <dbReference type="NCBI Taxonomy" id="391296"/>
    <lineage>
        <taxon>Bacteria</taxon>
        <taxon>Bacillati</taxon>
        <taxon>Bacillota</taxon>
        <taxon>Bacilli</taxon>
        <taxon>Lactobacillales</taxon>
        <taxon>Streptococcaceae</taxon>
        <taxon>Streptococcus</taxon>
    </lineage>
</organism>
<keyword id="KW-0066">ATP synthesis</keyword>
<keyword id="KW-1003">Cell membrane</keyword>
<keyword id="KW-0139">CF(1)</keyword>
<keyword id="KW-0375">Hydrogen ion transport</keyword>
<keyword id="KW-0406">Ion transport</keyword>
<keyword id="KW-0472">Membrane</keyword>
<keyword id="KW-0813">Transport</keyword>
<dbReference type="EMBL" id="CP000408">
    <property type="protein sequence ID" value="ABP92349.1"/>
    <property type="molecule type" value="Genomic_DNA"/>
</dbReference>
<dbReference type="SMR" id="A4W1W0"/>
<dbReference type="KEGG" id="ssv:SSU98_1191"/>
<dbReference type="HOGENOM" id="CLU_085114_1_2_9"/>
<dbReference type="GO" id="GO:0005886">
    <property type="term" value="C:plasma membrane"/>
    <property type="evidence" value="ECO:0007669"/>
    <property type="project" value="UniProtKB-SubCell"/>
</dbReference>
<dbReference type="GO" id="GO:0045259">
    <property type="term" value="C:proton-transporting ATP synthase complex"/>
    <property type="evidence" value="ECO:0007669"/>
    <property type="project" value="UniProtKB-KW"/>
</dbReference>
<dbReference type="GO" id="GO:0046933">
    <property type="term" value="F:proton-transporting ATP synthase activity, rotational mechanism"/>
    <property type="evidence" value="ECO:0007669"/>
    <property type="project" value="UniProtKB-UniRule"/>
</dbReference>
<dbReference type="HAMAP" id="MF_01416">
    <property type="entry name" value="ATP_synth_delta_bact"/>
    <property type="match status" value="1"/>
</dbReference>
<dbReference type="InterPro" id="IPR026015">
    <property type="entry name" value="ATP_synth_OSCP/delta_N_sf"/>
</dbReference>
<dbReference type="InterPro" id="IPR000711">
    <property type="entry name" value="ATPase_OSCP/dsu"/>
</dbReference>
<dbReference type="NCBIfam" id="TIGR01145">
    <property type="entry name" value="ATP_synt_delta"/>
    <property type="match status" value="1"/>
</dbReference>
<dbReference type="NCBIfam" id="NF004401">
    <property type="entry name" value="PRK05758.2-1"/>
    <property type="match status" value="1"/>
</dbReference>
<dbReference type="PANTHER" id="PTHR11910">
    <property type="entry name" value="ATP SYNTHASE DELTA CHAIN"/>
    <property type="match status" value="1"/>
</dbReference>
<dbReference type="Pfam" id="PF00213">
    <property type="entry name" value="OSCP"/>
    <property type="match status" value="1"/>
</dbReference>
<dbReference type="PRINTS" id="PR00125">
    <property type="entry name" value="ATPASEDELTA"/>
</dbReference>
<dbReference type="SUPFAM" id="SSF47928">
    <property type="entry name" value="N-terminal domain of the delta subunit of the F1F0-ATP synthase"/>
    <property type="match status" value="1"/>
</dbReference>
<reference key="1">
    <citation type="journal article" date="2007" name="PLoS ONE">
        <title>A glimpse of streptococcal toxic shock syndrome from comparative genomics of S. suis 2 Chinese isolates.</title>
        <authorList>
            <person name="Chen C."/>
            <person name="Tang J."/>
            <person name="Dong W."/>
            <person name="Wang C."/>
            <person name="Feng Y."/>
            <person name="Wang J."/>
            <person name="Zheng F."/>
            <person name="Pan X."/>
            <person name="Liu D."/>
            <person name="Li M."/>
            <person name="Song Y."/>
            <person name="Zhu X."/>
            <person name="Sun H."/>
            <person name="Feng T."/>
            <person name="Guo Z."/>
            <person name="Ju A."/>
            <person name="Ge J."/>
            <person name="Dong Y."/>
            <person name="Sun W."/>
            <person name="Jiang Y."/>
            <person name="Wang J."/>
            <person name="Yan J."/>
            <person name="Yang H."/>
            <person name="Wang X."/>
            <person name="Gao G.F."/>
            <person name="Yang R."/>
            <person name="Wang J."/>
            <person name="Yu J."/>
        </authorList>
    </citation>
    <scope>NUCLEOTIDE SEQUENCE [LARGE SCALE GENOMIC DNA]</scope>
    <source>
        <strain>98HAH33</strain>
    </source>
</reference>
<proteinExistence type="inferred from homology"/>
<comment type="function">
    <text evidence="1">F(1)F(0) ATP synthase produces ATP from ADP in the presence of a proton or sodium gradient. F-type ATPases consist of two structural domains, F(1) containing the extramembraneous catalytic core and F(0) containing the membrane proton channel, linked together by a central stalk and a peripheral stalk. During catalysis, ATP synthesis in the catalytic domain of F(1) is coupled via a rotary mechanism of the central stalk subunits to proton translocation.</text>
</comment>
<comment type="function">
    <text evidence="1">This protein is part of the stalk that links CF(0) to CF(1). It either transmits conformational changes from CF(0) to CF(1) or is implicated in proton conduction.</text>
</comment>
<comment type="subunit">
    <text evidence="1">F-type ATPases have 2 components, F(1) - the catalytic core - and F(0) - the membrane proton channel. F(1) has five subunits: alpha(3), beta(3), gamma(1), delta(1), epsilon(1). F(0) has three main subunits: a(1), b(2) and c(10-14). The alpha and beta chains form an alternating ring which encloses part of the gamma chain. F(1) is attached to F(0) by a central stalk formed by the gamma and epsilon chains, while a peripheral stalk is formed by the delta and b chains.</text>
</comment>
<comment type="subcellular location">
    <subcellularLocation>
        <location evidence="1">Cell membrane</location>
        <topology evidence="1">Peripheral membrane protein</topology>
    </subcellularLocation>
</comment>
<comment type="similarity">
    <text evidence="1">Belongs to the ATPase delta chain family.</text>
</comment>
<sequence>MNARENAIVQKYALSFVEKVSDHADIWDMYDQISDLISIIHDSKLNRILLSATVSREEKADFVRTVRQSSFWQINDLIEDVIRDGHADLLLETLERVQLQISKFKNEFEARVVSVYPLTEAQKERLRHLVEQRFSLRVRNITEELDQSLLGGFIVTVNHKVIDASVRTQLKDIRKKL</sequence>
<protein>
    <recommendedName>
        <fullName evidence="1">ATP synthase subunit delta</fullName>
    </recommendedName>
    <alternativeName>
        <fullName evidence="1">ATP synthase F(1) sector subunit delta</fullName>
    </alternativeName>
    <alternativeName>
        <fullName evidence="1">F-type ATPase subunit delta</fullName>
        <shortName evidence="1">F-ATPase subunit delta</shortName>
    </alternativeName>
</protein>
<name>ATPD_STRS2</name>
<accession>A4W1W0</accession>
<evidence type="ECO:0000255" key="1">
    <source>
        <dbReference type="HAMAP-Rule" id="MF_01416"/>
    </source>
</evidence>
<gene>
    <name evidence="1" type="primary">atpH</name>
    <name type="ordered locus">SSU98_1191</name>
</gene>